<evidence type="ECO:0000255" key="1">
    <source>
        <dbReference type="HAMAP-Rule" id="MF_01322"/>
    </source>
</evidence>
<evidence type="ECO:0000256" key="2">
    <source>
        <dbReference type="SAM" id="MobiDB-lite"/>
    </source>
</evidence>
<name>RPOC_CAUVC</name>
<keyword id="KW-0240">DNA-directed RNA polymerase</keyword>
<keyword id="KW-0460">Magnesium</keyword>
<keyword id="KW-0479">Metal-binding</keyword>
<keyword id="KW-0548">Nucleotidyltransferase</keyword>
<keyword id="KW-1185">Reference proteome</keyword>
<keyword id="KW-0804">Transcription</keyword>
<keyword id="KW-0808">Transferase</keyword>
<keyword id="KW-0862">Zinc</keyword>
<gene>
    <name evidence="1" type="primary">rpoC</name>
    <name type="ordered locus">CC_0503</name>
</gene>
<comment type="function">
    <text evidence="1">DNA-dependent RNA polymerase catalyzes the transcription of DNA into RNA using the four ribonucleoside triphosphates as substrates.</text>
</comment>
<comment type="catalytic activity">
    <reaction evidence="1">
        <text>RNA(n) + a ribonucleoside 5'-triphosphate = RNA(n+1) + diphosphate</text>
        <dbReference type="Rhea" id="RHEA:21248"/>
        <dbReference type="Rhea" id="RHEA-COMP:14527"/>
        <dbReference type="Rhea" id="RHEA-COMP:17342"/>
        <dbReference type="ChEBI" id="CHEBI:33019"/>
        <dbReference type="ChEBI" id="CHEBI:61557"/>
        <dbReference type="ChEBI" id="CHEBI:140395"/>
        <dbReference type="EC" id="2.7.7.6"/>
    </reaction>
</comment>
<comment type="cofactor">
    <cofactor evidence="1">
        <name>Mg(2+)</name>
        <dbReference type="ChEBI" id="CHEBI:18420"/>
    </cofactor>
    <text evidence="1">Binds 1 Mg(2+) ion per subunit.</text>
</comment>
<comment type="cofactor">
    <cofactor evidence="1">
        <name>Zn(2+)</name>
        <dbReference type="ChEBI" id="CHEBI:29105"/>
    </cofactor>
    <text evidence="1">Binds 2 Zn(2+) ions per subunit.</text>
</comment>
<comment type="subunit">
    <text evidence="1">The RNAP catalytic core consists of 2 alpha, 1 beta, 1 beta' and 1 omega subunit. When a sigma factor is associated with the core the holoenzyme is formed, which can initiate transcription.</text>
</comment>
<comment type="similarity">
    <text evidence="1">Belongs to the RNA polymerase beta' chain family.</text>
</comment>
<accession>Q9AAU1</accession>
<organism>
    <name type="scientific">Caulobacter vibrioides (strain ATCC 19089 / CIP 103742 / CB 15)</name>
    <name type="common">Caulobacter crescentus</name>
    <dbReference type="NCBI Taxonomy" id="190650"/>
    <lineage>
        <taxon>Bacteria</taxon>
        <taxon>Pseudomonadati</taxon>
        <taxon>Pseudomonadota</taxon>
        <taxon>Alphaproteobacteria</taxon>
        <taxon>Caulobacterales</taxon>
        <taxon>Caulobacteraceae</taxon>
        <taxon>Caulobacter</taxon>
    </lineage>
</organism>
<feature type="chain" id="PRO_0000067725" description="DNA-directed RNA polymerase subunit beta'">
    <location>
        <begin position="1"/>
        <end position="1396"/>
    </location>
</feature>
<feature type="region of interest" description="Disordered" evidence="2">
    <location>
        <begin position="1372"/>
        <end position="1396"/>
    </location>
</feature>
<feature type="compositionally biased region" description="Basic and acidic residues" evidence="2">
    <location>
        <begin position="1372"/>
        <end position="1382"/>
    </location>
</feature>
<feature type="binding site" evidence="1">
    <location>
        <position position="71"/>
    </location>
    <ligand>
        <name>Zn(2+)</name>
        <dbReference type="ChEBI" id="CHEBI:29105"/>
        <label>1</label>
    </ligand>
</feature>
<feature type="binding site" evidence="1">
    <location>
        <position position="73"/>
    </location>
    <ligand>
        <name>Zn(2+)</name>
        <dbReference type="ChEBI" id="CHEBI:29105"/>
        <label>1</label>
    </ligand>
</feature>
<feature type="binding site" evidence="1">
    <location>
        <position position="86"/>
    </location>
    <ligand>
        <name>Zn(2+)</name>
        <dbReference type="ChEBI" id="CHEBI:29105"/>
        <label>1</label>
    </ligand>
</feature>
<feature type="binding site" evidence="1">
    <location>
        <position position="89"/>
    </location>
    <ligand>
        <name>Zn(2+)</name>
        <dbReference type="ChEBI" id="CHEBI:29105"/>
        <label>1</label>
    </ligand>
</feature>
<feature type="binding site" evidence="1">
    <location>
        <position position="462"/>
    </location>
    <ligand>
        <name>Mg(2+)</name>
        <dbReference type="ChEBI" id="CHEBI:18420"/>
    </ligand>
</feature>
<feature type="binding site" evidence="1">
    <location>
        <position position="464"/>
    </location>
    <ligand>
        <name>Mg(2+)</name>
        <dbReference type="ChEBI" id="CHEBI:18420"/>
    </ligand>
</feature>
<feature type="binding site" evidence="1">
    <location>
        <position position="466"/>
    </location>
    <ligand>
        <name>Mg(2+)</name>
        <dbReference type="ChEBI" id="CHEBI:18420"/>
    </ligand>
</feature>
<feature type="binding site" evidence="1">
    <location>
        <position position="810"/>
    </location>
    <ligand>
        <name>Zn(2+)</name>
        <dbReference type="ChEBI" id="CHEBI:29105"/>
        <label>2</label>
    </ligand>
</feature>
<feature type="binding site" evidence="1">
    <location>
        <position position="884"/>
    </location>
    <ligand>
        <name>Zn(2+)</name>
        <dbReference type="ChEBI" id="CHEBI:29105"/>
        <label>2</label>
    </ligand>
</feature>
<feature type="binding site" evidence="1">
    <location>
        <position position="891"/>
    </location>
    <ligand>
        <name>Zn(2+)</name>
        <dbReference type="ChEBI" id="CHEBI:29105"/>
        <label>2</label>
    </ligand>
</feature>
<feature type="binding site" evidence="1">
    <location>
        <position position="894"/>
    </location>
    <ligand>
        <name>Zn(2+)</name>
        <dbReference type="ChEBI" id="CHEBI:29105"/>
        <label>2</label>
    </ligand>
</feature>
<proteinExistence type="inferred from homology"/>
<sequence length="1396" mass="154250">MNQEVLNIFNPVQAAPTFDQIRISLASPEKIRSWSFGEIKKPETINYRTFKPERDGLFCARIFGPTKDYECLCGKYKRMKYKGIICEKCGVEVTLARVRRERMGHIELASPVAHIWFLKSLPSRIAMMLDMPLKDIERVLYFEYYIVTEPGLTPLKQHQLLSEDDYMRAQEEYGDDSFTAEIGAEAIQNLLKAIDLEKEAERLREELSGTVSDMKQKKFSKRLKILEAFQESGNRPEWMVLTVVPVIPPELRPLVPLDGGRFATSDLNDLYRRVINRNNRLKRLIELRAPDIIIRNEKRMLQESVDALFDNGRRGRVITGANKRPLKSLADMLKGKQGRFRQNLLGKRVDYSGRSVIVVGPELKLHECGLPKKMALELFKPFIYARLDAKGLSGTVKQSKRMVEREQPQVWDILEEVIREHPVLLNRAPTLHRLGIQAFEPKLIEGKAIQLHPLVCAAFNADFDGDQMAVHVPLSLEAQLEARVLMMSTNNILSPANGRPIIVPSQDIVLGLYYLSVARDGEPGEGKIFADLGEIEAAMDAGVVSLHAKIKARHTEMTPEGVLLRKVIDTTPGRMKIAALLPHHPQIGHRLIEKALTKKEIGNLIDIVYRHCGQKATVIFADKVMGLGFKEAAKAGISFGKDDIIIPVRKTAIVEETRKLAEEYEQQYADGLITKGEKYNKVVDAWAKATDRVADEMMAELQMKHKDENGREKEINAIYMMAHSGARGSQAQMKQLGGMRGLMAKPSGEIIETPIVSNFKEGLTVQEYFNSTHGARKGLADTALKTANSGYLTRRLVDVAQDCIIVEEDCGTTKGITLRAVVEGGDVLVSLGSRVLGRFTAEDVKDPGTGELVVPADTYIDENIADAIEAAVVQSVKVRSVLTCEAKIGVCGACYGRDLARGTPVNIGEAVGVIAAQSIGEPGTQLTMRTFHIGGTAQVAEQSFFEASNEGTVRVIGPTVVGSDGALVIMSRNTSVSVLVDGKERETYKPPYGARLRVKDGDLVKRGQRLGDWDPYTTPIITEVAGKIRAEDLVDGLSIREEVDEATGIAQRVVADWRTSARGSDLRPAMGVLSEDGSYKRLSNGGEARYLLSAGAILSVADGDEVKPGEVIARIPTEGAKTRDITGGLPRVAELFEARRPKDCAVIAEMDGRVEFGKDYKNKRRIKITPDVDADGNQPEAVEFLIPKGKHIAVHDGDYITKGEYIIDGNPDPHDILRILGVEALANFLVDEIQEVYRLQGVPINDKHIETIVRQMLQKVEILEPGDTGLIKGDHLDKPEFDKEQEKAIARGGRPAVTQPVLLGITKASLQTKSFISAASFQETTRVLTEASVHGKTDTLEGLKENVIVGRLIPAGTGSYLRSLQRVAAKRDEQLAQQREDAMEPLPAEIALSDAE</sequence>
<protein>
    <recommendedName>
        <fullName evidence="1">DNA-directed RNA polymerase subunit beta'</fullName>
        <shortName evidence="1">RNAP subunit beta'</shortName>
        <ecNumber evidence="1">2.7.7.6</ecNumber>
    </recommendedName>
    <alternativeName>
        <fullName evidence="1">RNA polymerase subunit beta'</fullName>
    </alternativeName>
    <alternativeName>
        <fullName evidence="1">Transcriptase subunit beta'</fullName>
    </alternativeName>
</protein>
<reference key="1">
    <citation type="journal article" date="2001" name="Proc. Natl. Acad. Sci. U.S.A.">
        <title>Complete genome sequence of Caulobacter crescentus.</title>
        <authorList>
            <person name="Nierman W.C."/>
            <person name="Feldblyum T.V."/>
            <person name="Laub M.T."/>
            <person name="Paulsen I.T."/>
            <person name="Nelson K.E."/>
            <person name="Eisen J.A."/>
            <person name="Heidelberg J.F."/>
            <person name="Alley M.R.K."/>
            <person name="Ohta N."/>
            <person name="Maddock J.R."/>
            <person name="Potocka I."/>
            <person name="Nelson W.C."/>
            <person name="Newton A."/>
            <person name="Stephens C."/>
            <person name="Phadke N.D."/>
            <person name="Ely B."/>
            <person name="DeBoy R.T."/>
            <person name="Dodson R.J."/>
            <person name="Durkin A.S."/>
            <person name="Gwinn M.L."/>
            <person name="Haft D.H."/>
            <person name="Kolonay J.F."/>
            <person name="Smit J."/>
            <person name="Craven M.B."/>
            <person name="Khouri H.M."/>
            <person name="Shetty J."/>
            <person name="Berry K.J."/>
            <person name="Utterback T.R."/>
            <person name="Tran K."/>
            <person name="Wolf A.M."/>
            <person name="Vamathevan J.J."/>
            <person name="Ermolaeva M.D."/>
            <person name="White O."/>
            <person name="Salzberg S.L."/>
            <person name="Venter J.C."/>
            <person name="Shapiro L."/>
            <person name="Fraser C.M."/>
        </authorList>
    </citation>
    <scope>NUCLEOTIDE SEQUENCE [LARGE SCALE GENOMIC DNA]</scope>
    <source>
        <strain>ATCC 19089 / CIP 103742 / CB 15</strain>
    </source>
</reference>
<dbReference type="EC" id="2.7.7.6" evidence="1"/>
<dbReference type="EMBL" id="AE005673">
    <property type="protein sequence ID" value="AAK22490.1"/>
    <property type="molecule type" value="Genomic_DNA"/>
</dbReference>
<dbReference type="PIR" id="F87311">
    <property type="entry name" value="F87311"/>
</dbReference>
<dbReference type="RefSeq" id="NP_419322.1">
    <property type="nucleotide sequence ID" value="NC_002696.2"/>
</dbReference>
<dbReference type="RefSeq" id="WP_010918391.1">
    <property type="nucleotide sequence ID" value="NC_002696.2"/>
</dbReference>
<dbReference type="SMR" id="Q9AAU1"/>
<dbReference type="STRING" id="190650.CC_0503"/>
<dbReference type="EnsemblBacteria" id="AAK22490">
    <property type="protein sequence ID" value="AAK22490"/>
    <property type="gene ID" value="CC_0503"/>
</dbReference>
<dbReference type="KEGG" id="ccr:CC_0503"/>
<dbReference type="PATRIC" id="fig|190650.5.peg.513"/>
<dbReference type="eggNOG" id="COG0086">
    <property type="taxonomic scope" value="Bacteria"/>
</dbReference>
<dbReference type="HOGENOM" id="CLU_000524_3_1_5"/>
<dbReference type="BioCyc" id="CAULO:CC0503-MONOMER"/>
<dbReference type="Proteomes" id="UP000001816">
    <property type="component" value="Chromosome"/>
</dbReference>
<dbReference type="GO" id="GO:0000428">
    <property type="term" value="C:DNA-directed RNA polymerase complex"/>
    <property type="evidence" value="ECO:0007669"/>
    <property type="project" value="UniProtKB-KW"/>
</dbReference>
<dbReference type="GO" id="GO:0003677">
    <property type="term" value="F:DNA binding"/>
    <property type="evidence" value="ECO:0007669"/>
    <property type="project" value="UniProtKB-UniRule"/>
</dbReference>
<dbReference type="GO" id="GO:0003899">
    <property type="term" value="F:DNA-directed RNA polymerase activity"/>
    <property type="evidence" value="ECO:0007669"/>
    <property type="project" value="UniProtKB-UniRule"/>
</dbReference>
<dbReference type="GO" id="GO:0000287">
    <property type="term" value="F:magnesium ion binding"/>
    <property type="evidence" value="ECO:0007669"/>
    <property type="project" value="UniProtKB-UniRule"/>
</dbReference>
<dbReference type="GO" id="GO:0008270">
    <property type="term" value="F:zinc ion binding"/>
    <property type="evidence" value="ECO:0007669"/>
    <property type="project" value="UniProtKB-UniRule"/>
</dbReference>
<dbReference type="GO" id="GO:0006351">
    <property type="term" value="P:DNA-templated transcription"/>
    <property type="evidence" value="ECO:0007669"/>
    <property type="project" value="UniProtKB-UniRule"/>
</dbReference>
<dbReference type="CDD" id="cd02655">
    <property type="entry name" value="RNAP_beta'_C"/>
    <property type="match status" value="1"/>
</dbReference>
<dbReference type="CDD" id="cd01609">
    <property type="entry name" value="RNAP_beta'_N"/>
    <property type="match status" value="1"/>
</dbReference>
<dbReference type="FunFam" id="4.10.860.120:FF:000001">
    <property type="entry name" value="DNA-directed RNA polymerase subunit beta"/>
    <property type="match status" value="1"/>
</dbReference>
<dbReference type="Gene3D" id="1.10.132.30">
    <property type="match status" value="1"/>
</dbReference>
<dbReference type="Gene3D" id="1.10.150.390">
    <property type="match status" value="1"/>
</dbReference>
<dbReference type="Gene3D" id="1.10.1790.20">
    <property type="match status" value="1"/>
</dbReference>
<dbReference type="Gene3D" id="1.10.40.90">
    <property type="match status" value="1"/>
</dbReference>
<dbReference type="Gene3D" id="2.40.40.20">
    <property type="match status" value="1"/>
</dbReference>
<dbReference type="Gene3D" id="2.40.50.100">
    <property type="match status" value="3"/>
</dbReference>
<dbReference type="Gene3D" id="4.10.860.120">
    <property type="entry name" value="RNA polymerase II, clamp domain"/>
    <property type="match status" value="1"/>
</dbReference>
<dbReference type="Gene3D" id="1.10.274.100">
    <property type="entry name" value="RNA polymerase Rpb1, domain 3"/>
    <property type="match status" value="2"/>
</dbReference>
<dbReference type="HAMAP" id="MF_01322">
    <property type="entry name" value="RNApol_bact_RpoC"/>
    <property type="match status" value="1"/>
</dbReference>
<dbReference type="InterPro" id="IPR045867">
    <property type="entry name" value="DNA-dir_RpoC_beta_prime"/>
</dbReference>
<dbReference type="InterPro" id="IPR012754">
    <property type="entry name" value="DNA-dir_RpoC_beta_prime_bact"/>
</dbReference>
<dbReference type="InterPro" id="IPR000722">
    <property type="entry name" value="RNA_pol_asu"/>
</dbReference>
<dbReference type="InterPro" id="IPR006592">
    <property type="entry name" value="RNA_pol_N"/>
</dbReference>
<dbReference type="InterPro" id="IPR007080">
    <property type="entry name" value="RNA_pol_Rpb1_1"/>
</dbReference>
<dbReference type="InterPro" id="IPR007066">
    <property type="entry name" value="RNA_pol_Rpb1_3"/>
</dbReference>
<dbReference type="InterPro" id="IPR042102">
    <property type="entry name" value="RNA_pol_Rpb1_3_sf"/>
</dbReference>
<dbReference type="InterPro" id="IPR007083">
    <property type="entry name" value="RNA_pol_Rpb1_4"/>
</dbReference>
<dbReference type="InterPro" id="IPR007081">
    <property type="entry name" value="RNA_pol_Rpb1_5"/>
</dbReference>
<dbReference type="InterPro" id="IPR044893">
    <property type="entry name" value="RNA_pol_Rpb1_clamp_domain"/>
</dbReference>
<dbReference type="InterPro" id="IPR038120">
    <property type="entry name" value="Rpb1_funnel_sf"/>
</dbReference>
<dbReference type="NCBIfam" id="TIGR02386">
    <property type="entry name" value="rpoC_TIGR"/>
    <property type="match status" value="1"/>
</dbReference>
<dbReference type="PANTHER" id="PTHR19376">
    <property type="entry name" value="DNA-DIRECTED RNA POLYMERASE"/>
    <property type="match status" value="1"/>
</dbReference>
<dbReference type="PANTHER" id="PTHR19376:SF54">
    <property type="entry name" value="DNA-DIRECTED RNA POLYMERASE SUBUNIT BETA"/>
    <property type="match status" value="1"/>
</dbReference>
<dbReference type="Pfam" id="PF04997">
    <property type="entry name" value="RNA_pol_Rpb1_1"/>
    <property type="match status" value="1"/>
</dbReference>
<dbReference type="Pfam" id="PF00623">
    <property type="entry name" value="RNA_pol_Rpb1_2"/>
    <property type="match status" value="2"/>
</dbReference>
<dbReference type="Pfam" id="PF04983">
    <property type="entry name" value="RNA_pol_Rpb1_3"/>
    <property type="match status" value="1"/>
</dbReference>
<dbReference type="Pfam" id="PF05000">
    <property type="entry name" value="RNA_pol_Rpb1_4"/>
    <property type="match status" value="1"/>
</dbReference>
<dbReference type="Pfam" id="PF04998">
    <property type="entry name" value="RNA_pol_Rpb1_5"/>
    <property type="match status" value="1"/>
</dbReference>
<dbReference type="SMART" id="SM00663">
    <property type="entry name" value="RPOLA_N"/>
    <property type="match status" value="1"/>
</dbReference>
<dbReference type="SUPFAM" id="SSF64484">
    <property type="entry name" value="beta and beta-prime subunits of DNA dependent RNA-polymerase"/>
    <property type="match status" value="1"/>
</dbReference>